<organism>
    <name type="scientific">Arabidopsis thaliana</name>
    <name type="common">Mouse-ear cress</name>
    <dbReference type="NCBI Taxonomy" id="3702"/>
    <lineage>
        <taxon>Eukaryota</taxon>
        <taxon>Viridiplantae</taxon>
        <taxon>Streptophyta</taxon>
        <taxon>Embryophyta</taxon>
        <taxon>Tracheophyta</taxon>
        <taxon>Spermatophyta</taxon>
        <taxon>Magnoliopsida</taxon>
        <taxon>eudicotyledons</taxon>
        <taxon>Gunneridae</taxon>
        <taxon>Pentapetalae</taxon>
        <taxon>rosids</taxon>
        <taxon>malvids</taxon>
        <taxon>Brassicales</taxon>
        <taxon>Brassicaceae</taxon>
        <taxon>Camelineae</taxon>
        <taxon>Arabidopsis</taxon>
    </lineage>
</organism>
<gene>
    <name type="ordered locus">At2g35760</name>
    <name type="ORF">T20F21.5</name>
</gene>
<proteinExistence type="evidence at transcript level"/>
<name>CSPL7_ARATH</name>
<accession>Q8L924</accession>
<accession>Q8W100</accession>
<accession>Q9ZQP8</accession>
<reference key="1">
    <citation type="journal article" date="1999" name="Nature">
        <title>Sequence and analysis of chromosome 2 of the plant Arabidopsis thaliana.</title>
        <authorList>
            <person name="Lin X."/>
            <person name="Kaul S."/>
            <person name="Rounsley S.D."/>
            <person name="Shea T.P."/>
            <person name="Benito M.-I."/>
            <person name="Town C.D."/>
            <person name="Fujii C.Y."/>
            <person name="Mason T.M."/>
            <person name="Bowman C.L."/>
            <person name="Barnstead M.E."/>
            <person name="Feldblyum T.V."/>
            <person name="Buell C.R."/>
            <person name="Ketchum K.A."/>
            <person name="Lee J.J."/>
            <person name="Ronning C.M."/>
            <person name="Koo H.L."/>
            <person name="Moffat K.S."/>
            <person name="Cronin L.A."/>
            <person name="Shen M."/>
            <person name="Pai G."/>
            <person name="Van Aken S."/>
            <person name="Umayam L."/>
            <person name="Tallon L.J."/>
            <person name="Gill J.E."/>
            <person name="Adams M.D."/>
            <person name="Carrera A.J."/>
            <person name="Creasy T.H."/>
            <person name="Goodman H.M."/>
            <person name="Somerville C.R."/>
            <person name="Copenhaver G.P."/>
            <person name="Preuss D."/>
            <person name="Nierman W.C."/>
            <person name="White O."/>
            <person name="Eisen J.A."/>
            <person name="Salzberg S.L."/>
            <person name="Fraser C.M."/>
            <person name="Venter J.C."/>
        </authorList>
    </citation>
    <scope>NUCLEOTIDE SEQUENCE [LARGE SCALE GENOMIC DNA]</scope>
    <source>
        <strain>cv. Columbia</strain>
    </source>
</reference>
<reference key="2">
    <citation type="journal article" date="2017" name="Plant J.">
        <title>Araport11: a complete reannotation of the Arabidopsis thaliana reference genome.</title>
        <authorList>
            <person name="Cheng C.Y."/>
            <person name="Krishnakumar V."/>
            <person name="Chan A.P."/>
            <person name="Thibaud-Nissen F."/>
            <person name="Schobel S."/>
            <person name="Town C.D."/>
        </authorList>
    </citation>
    <scope>GENOME REANNOTATION</scope>
    <source>
        <strain>cv. Columbia</strain>
    </source>
</reference>
<reference key="3">
    <citation type="journal article" date="2003" name="Science">
        <title>Empirical analysis of transcriptional activity in the Arabidopsis genome.</title>
        <authorList>
            <person name="Yamada K."/>
            <person name="Lim J."/>
            <person name="Dale J.M."/>
            <person name="Chen H."/>
            <person name="Shinn P."/>
            <person name="Palm C.J."/>
            <person name="Southwick A.M."/>
            <person name="Wu H.C."/>
            <person name="Kim C.J."/>
            <person name="Nguyen M."/>
            <person name="Pham P.K."/>
            <person name="Cheuk R.F."/>
            <person name="Karlin-Newmann G."/>
            <person name="Liu S.X."/>
            <person name="Lam B."/>
            <person name="Sakano H."/>
            <person name="Wu T."/>
            <person name="Yu G."/>
            <person name="Miranda M."/>
            <person name="Quach H.L."/>
            <person name="Tripp M."/>
            <person name="Chang C.H."/>
            <person name="Lee J.M."/>
            <person name="Toriumi M.J."/>
            <person name="Chan M.M."/>
            <person name="Tang C.C."/>
            <person name="Onodera C.S."/>
            <person name="Deng J.M."/>
            <person name="Akiyama K."/>
            <person name="Ansari Y."/>
            <person name="Arakawa T."/>
            <person name="Banh J."/>
            <person name="Banno F."/>
            <person name="Bowser L."/>
            <person name="Brooks S.Y."/>
            <person name="Carninci P."/>
            <person name="Chao Q."/>
            <person name="Choy N."/>
            <person name="Enju A."/>
            <person name="Goldsmith A.D."/>
            <person name="Gurjal M."/>
            <person name="Hansen N.F."/>
            <person name="Hayashizaki Y."/>
            <person name="Johnson-Hopson C."/>
            <person name="Hsuan V.W."/>
            <person name="Iida K."/>
            <person name="Karnes M."/>
            <person name="Khan S."/>
            <person name="Koesema E."/>
            <person name="Ishida J."/>
            <person name="Jiang P.X."/>
            <person name="Jones T."/>
            <person name="Kawai J."/>
            <person name="Kamiya A."/>
            <person name="Meyers C."/>
            <person name="Nakajima M."/>
            <person name="Narusaka M."/>
            <person name="Seki M."/>
            <person name="Sakurai T."/>
            <person name="Satou M."/>
            <person name="Tamse R."/>
            <person name="Vaysberg M."/>
            <person name="Wallender E.K."/>
            <person name="Wong C."/>
            <person name="Yamamura Y."/>
            <person name="Yuan S."/>
            <person name="Shinozaki K."/>
            <person name="Davis R.W."/>
            <person name="Theologis A."/>
            <person name="Ecker J.R."/>
        </authorList>
    </citation>
    <scope>NUCLEOTIDE SEQUENCE [LARGE SCALE MRNA]</scope>
    <source>
        <strain>cv. Columbia</strain>
    </source>
</reference>
<reference key="4">
    <citation type="submission" date="2002-03" db="EMBL/GenBank/DDBJ databases">
        <title>Full-length cDNA from Arabidopsis thaliana.</title>
        <authorList>
            <person name="Brover V.V."/>
            <person name="Troukhan M.E."/>
            <person name="Alexandrov N.A."/>
            <person name="Lu Y.-P."/>
            <person name="Flavell R.B."/>
            <person name="Feldmann K.A."/>
        </authorList>
    </citation>
    <scope>NUCLEOTIDE SEQUENCE [LARGE SCALE MRNA]</scope>
</reference>
<reference key="5">
    <citation type="journal article" date="2014" name="Plant Physiol.">
        <title>Functional and evolutionary analysis of the CASPARIAN STRIP MEMBRANE DOMAIN PROTEIN family.</title>
        <authorList>
            <person name="Roppolo D."/>
            <person name="Boeckmann B."/>
            <person name="Pfister A."/>
            <person name="Boutet E."/>
            <person name="Rubio M.C."/>
            <person name="Denervaud-Tendon V."/>
            <person name="Vermeer J.E."/>
            <person name="Gheyselinck J."/>
            <person name="Xenarios I."/>
            <person name="Geldner N."/>
        </authorList>
    </citation>
    <scope>GENE FAMILY</scope>
    <scope>NOMENCLATURE</scope>
</reference>
<feature type="chain" id="PRO_0000308658" description="CASP-like protein 2B2">
    <location>
        <begin position="1"/>
        <end position="201"/>
    </location>
</feature>
<feature type="topological domain" description="Cytoplasmic" evidence="2">
    <location>
        <begin position="1"/>
        <end position="28"/>
    </location>
</feature>
<feature type="transmembrane region" description="Helical" evidence="2">
    <location>
        <begin position="29"/>
        <end position="49"/>
    </location>
</feature>
<feature type="topological domain" description="Extracellular" evidence="2">
    <location>
        <begin position="50"/>
        <end position="71"/>
    </location>
</feature>
<feature type="transmembrane region" description="Helical" evidence="2">
    <location>
        <begin position="72"/>
        <end position="92"/>
    </location>
</feature>
<feature type="topological domain" description="Cytoplasmic" evidence="2">
    <location>
        <begin position="93"/>
        <end position="108"/>
    </location>
</feature>
<feature type="transmembrane region" description="Helical" evidence="2">
    <location>
        <begin position="109"/>
        <end position="129"/>
    </location>
</feature>
<feature type="topological domain" description="Extracellular" evidence="2">
    <location>
        <begin position="130"/>
        <end position="166"/>
    </location>
</feature>
<feature type="transmembrane region" description="Helical" evidence="2">
    <location>
        <begin position="167"/>
        <end position="187"/>
    </location>
</feature>
<feature type="topological domain" description="Cytoplasmic" evidence="2">
    <location>
        <begin position="188"/>
        <end position="201"/>
    </location>
</feature>
<feature type="sequence conflict" description="In Ref. 3; AAM66995." evidence="3" ref="3">
    <original>SGST</original>
    <variation>TETS</variation>
    <location>
        <begin position="14"/>
        <end position="17"/>
    </location>
</feature>
<feature type="sequence conflict" description="In Ref. 3; AAM66995." evidence="3" ref="3">
    <original>A</original>
    <variation>S</variation>
    <location>
        <position position="42"/>
    </location>
</feature>
<feature type="sequence conflict" description="In Ref. 3; AAM66995." evidence="3" ref="3">
    <original>A</original>
    <variation>S</variation>
    <location>
        <position position="45"/>
    </location>
</feature>
<sequence length="201" mass="21513">MSYLGVGVSPGNVSGSTTKMKLIDRKVRVTELILRCLVCVLALVAAILIATDVQVREIFMIQKKAKFTDMKALVLLVVVNGIAAGYSLVQAVRCVVGLMKGRVLFSKPLAWAIFFGDQAVAYLCVAGVAAAAQSAAFAKLGEPELQWMKICNMYGKFCNQVGEGIASALFACIGMVLISCISAFGVFRLYGGSKSRPSSRW</sequence>
<protein>
    <recommendedName>
        <fullName>CASP-like protein 2B2</fullName>
        <shortName>AtCASPL2B2</shortName>
    </recommendedName>
</protein>
<evidence type="ECO:0000250" key="1"/>
<evidence type="ECO:0000255" key="2"/>
<evidence type="ECO:0000305" key="3"/>
<dbReference type="EMBL" id="AC006068">
    <property type="protein sequence ID" value="AAD15439.2"/>
    <property type="molecule type" value="Genomic_DNA"/>
</dbReference>
<dbReference type="EMBL" id="CP002685">
    <property type="protein sequence ID" value="AEC09157.1"/>
    <property type="molecule type" value="Genomic_DNA"/>
</dbReference>
<dbReference type="EMBL" id="AF462840">
    <property type="protein sequence ID" value="AAL58928.1"/>
    <property type="molecule type" value="mRNA"/>
</dbReference>
<dbReference type="EMBL" id="AY124824">
    <property type="protein sequence ID" value="AAM70533.1"/>
    <property type="molecule type" value="mRNA"/>
</dbReference>
<dbReference type="EMBL" id="AY088673">
    <property type="protein sequence ID" value="AAM66995.1"/>
    <property type="molecule type" value="mRNA"/>
</dbReference>
<dbReference type="PIR" id="F84772">
    <property type="entry name" value="F84772"/>
</dbReference>
<dbReference type="RefSeq" id="NP_565822.1">
    <property type="nucleotide sequence ID" value="NM_129134.4"/>
</dbReference>
<dbReference type="SMR" id="Q8L924"/>
<dbReference type="BioGRID" id="3492">
    <property type="interactions" value="1"/>
</dbReference>
<dbReference type="FunCoup" id="Q8L924">
    <property type="interactions" value="57"/>
</dbReference>
<dbReference type="iPTMnet" id="Q8L924"/>
<dbReference type="PaxDb" id="3702-AT2G35760.1"/>
<dbReference type="ProteomicsDB" id="224433"/>
<dbReference type="EnsemblPlants" id="AT2G35760.1">
    <property type="protein sequence ID" value="AT2G35760.1"/>
    <property type="gene ID" value="AT2G35760"/>
</dbReference>
<dbReference type="GeneID" id="818148"/>
<dbReference type="Gramene" id="AT2G35760.1">
    <property type="protein sequence ID" value="AT2G35760.1"/>
    <property type="gene ID" value="AT2G35760"/>
</dbReference>
<dbReference type="KEGG" id="ath:AT2G35760"/>
<dbReference type="Araport" id="AT2G35760"/>
<dbReference type="TAIR" id="AT2G35760">
    <property type="gene designation" value="CASPL2B2"/>
</dbReference>
<dbReference type="eggNOG" id="ENOG502QQH2">
    <property type="taxonomic scope" value="Eukaryota"/>
</dbReference>
<dbReference type="HOGENOM" id="CLU_066104_0_1_1"/>
<dbReference type="InParanoid" id="Q8L924"/>
<dbReference type="OMA" id="QWMGICA"/>
<dbReference type="PhylomeDB" id="Q8L924"/>
<dbReference type="PRO" id="PR:Q8L924"/>
<dbReference type="Proteomes" id="UP000006548">
    <property type="component" value="Chromosome 2"/>
</dbReference>
<dbReference type="ExpressionAtlas" id="Q8L924">
    <property type="expression patterns" value="baseline and differential"/>
</dbReference>
<dbReference type="GO" id="GO:0005886">
    <property type="term" value="C:plasma membrane"/>
    <property type="evidence" value="ECO:0007669"/>
    <property type="project" value="UniProtKB-SubCell"/>
</dbReference>
<dbReference type="InterPro" id="IPR006459">
    <property type="entry name" value="CASP/CASPL"/>
</dbReference>
<dbReference type="InterPro" id="IPR006702">
    <property type="entry name" value="CASP_dom"/>
</dbReference>
<dbReference type="NCBIfam" id="TIGR01569">
    <property type="entry name" value="A_tha_TIGR01569"/>
    <property type="match status" value="1"/>
</dbReference>
<dbReference type="PANTHER" id="PTHR33573:SF64">
    <property type="entry name" value="CASP-LIKE PROTEIN 2B1"/>
    <property type="match status" value="1"/>
</dbReference>
<dbReference type="PANTHER" id="PTHR33573">
    <property type="entry name" value="CASP-LIKE PROTEIN 4A4"/>
    <property type="match status" value="1"/>
</dbReference>
<dbReference type="Pfam" id="PF04535">
    <property type="entry name" value="CASP_dom"/>
    <property type="match status" value="1"/>
</dbReference>
<keyword id="KW-1003">Cell membrane</keyword>
<keyword id="KW-0472">Membrane</keyword>
<keyword id="KW-1185">Reference proteome</keyword>
<keyword id="KW-0812">Transmembrane</keyword>
<keyword id="KW-1133">Transmembrane helix</keyword>
<comment type="subunit">
    <text evidence="1">Homodimer and heterodimers.</text>
</comment>
<comment type="subcellular location">
    <subcellularLocation>
        <location evidence="1">Cell membrane</location>
        <topology evidence="1">Multi-pass membrane protein</topology>
    </subcellularLocation>
</comment>
<comment type="similarity">
    <text evidence="3">Belongs to the Casparian strip membrane proteins (CASP) family.</text>
</comment>